<accession>Q03472</accession>
<dbReference type="EMBL" id="L06820">
    <property type="protein sequence ID" value="AAA30994.1"/>
    <property type="molecule type" value="mRNA"/>
</dbReference>
<dbReference type="PIR" id="A44247">
    <property type="entry name" value="A44247"/>
</dbReference>
<dbReference type="RefSeq" id="NP_999107.1">
    <property type="nucleotide sequence ID" value="NM_213942.1"/>
</dbReference>
<dbReference type="SMR" id="Q03472"/>
<dbReference type="STRING" id="9823.ENSSSCP00000016605"/>
<dbReference type="PaxDb" id="9823-ENSSSCP00000016606"/>
<dbReference type="PeptideAtlas" id="Q03472"/>
<dbReference type="Ensembl" id="ENSSSCT00090024300">
    <property type="protein sequence ID" value="ENSSSCP00090015056"/>
    <property type="gene ID" value="ENSSSCG00090013852"/>
</dbReference>
<dbReference type="Ensembl" id="ENSSSCT00105005425">
    <property type="protein sequence ID" value="ENSSSCP00105004039"/>
    <property type="gene ID" value="ENSSSCG00105002771"/>
</dbReference>
<dbReference type="Ensembl" id="ENSSSCT00110044737">
    <property type="protein sequence ID" value="ENSSSCP00110031613"/>
    <property type="gene ID" value="ENSSSCG00110023082"/>
</dbReference>
<dbReference type="Ensembl" id="ENSSSCT00130018398">
    <property type="protein sequence ID" value="ENSSSCP00130012429"/>
    <property type="gene ID" value="ENSSSCG00130009847"/>
</dbReference>
<dbReference type="GeneID" id="396982"/>
<dbReference type="KEGG" id="ssc:396982"/>
<dbReference type="CTD" id="722"/>
<dbReference type="eggNOG" id="ENOG502RWWT">
    <property type="taxonomic scope" value="Eukaryota"/>
</dbReference>
<dbReference type="InParanoid" id="Q03472"/>
<dbReference type="OrthoDB" id="8961654at2759"/>
<dbReference type="Proteomes" id="UP000008227">
    <property type="component" value="Unplaced"/>
</dbReference>
<dbReference type="Proteomes" id="UP000314985">
    <property type="component" value="Unplaced"/>
</dbReference>
<dbReference type="Proteomes" id="UP000694570">
    <property type="component" value="Unplaced"/>
</dbReference>
<dbReference type="Proteomes" id="UP000694571">
    <property type="component" value="Unplaced"/>
</dbReference>
<dbReference type="Proteomes" id="UP000694720">
    <property type="component" value="Unplaced"/>
</dbReference>
<dbReference type="Proteomes" id="UP000694722">
    <property type="component" value="Unplaced"/>
</dbReference>
<dbReference type="Proteomes" id="UP000694723">
    <property type="component" value="Unplaced"/>
</dbReference>
<dbReference type="Proteomes" id="UP000694724">
    <property type="component" value="Unplaced"/>
</dbReference>
<dbReference type="Proteomes" id="UP000694725">
    <property type="component" value="Unplaced"/>
</dbReference>
<dbReference type="Proteomes" id="UP000694726">
    <property type="component" value="Unplaced"/>
</dbReference>
<dbReference type="Proteomes" id="UP000694727">
    <property type="component" value="Unplaced"/>
</dbReference>
<dbReference type="Proteomes" id="UP000694728">
    <property type="component" value="Unplaced"/>
</dbReference>
<dbReference type="GO" id="GO:0005576">
    <property type="term" value="C:extracellular region"/>
    <property type="evidence" value="ECO:0007669"/>
    <property type="project" value="UniProtKB-SubCell"/>
</dbReference>
<dbReference type="GO" id="GO:0006869">
    <property type="term" value="P:lipid transport"/>
    <property type="evidence" value="ECO:0007669"/>
    <property type="project" value="UniProtKB-KW"/>
</dbReference>
<dbReference type="CDD" id="cd00033">
    <property type="entry name" value="CCP"/>
    <property type="match status" value="2"/>
</dbReference>
<dbReference type="FunFam" id="2.10.70.10:FF:000014">
    <property type="entry name" value="Membrane cofactor protein"/>
    <property type="match status" value="1"/>
</dbReference>
<dbReference type="Gene3D" id="1.20.5.3730">
    <property type="match status" value="1"/>
</dbReference>
<dbReference type="Gene3D" id="2.10.70.10">
    <property type="entry name" value="Complement Module, domain 1"/>
    <property type="match status" value="2"/>
</dbReference>
<dbReference type="InterPro" id="IPR040514">
    <property type="entry name" value="C4bp_oligo"/>
</dbReference>
<dbReference type="InterPro" id="IPR051277">
    <property type="entry name" value="SEZ6_CSMD_C4BPB_Regulators"/>
</dbReference>
<dbReference type="InterPro" id="IPR035976">
    <property type="entry name" value="Sushi/SCR/CCP_sf"/>
</dbReference>
<dbReference type="InterPro" id="IPR000436">
    <property type="entry name" value="Sushi_SCR_CCP_dom"/>
</dbReference>
<dbReference type="PANTHER" id="PTHR45656">
    <property type="entry name" value="PROTEIN CBR-CLEC-78"/>
    <property type="match status" value="1"/>
</dbReference>
<dbReference type="PANTHER" id="PTHR45656:SF4">
    <property type="entry name" value="PROTEIN CBR-CLEC-78"/>
    <property type="match status" value="1"/>
</dbReference>
<dbReference type="Pfam" id="PF18453">
    <property type="entry name" value="C4bp_oligo"/>
    <property type="match status" value="1"/>
</dbReference>
<dbReference type="Pfam" id="PF00084">
    <property type="entry name" value="Sushi"/>
    <property type="match status" value="2"/>
</dbReference>
<dbReference type="SMART" id="SM00032">
    <property type="entry name" value="CCP"/>
    <property type="match status" value="2"/>
</dbReference>
<dbReference type="SUPFAM" id="SSF57535">
    <property type="entry name" value="Complement control module/SCR domain"/>
    <property type="match status" value="2"/>
</dbReference>
<dbReference type="PROSITE" id="PS50923">
    <property type="entry name" value="SUSHI"/>
    <property type="match status" value="2"/>
</dbReference>
<evidence type="ECO:0000255" key="1">
    <source>
        <dbReference type="PROSITE-ProRule" id="PRU00302"/>
    </source>
</evidence>
<evidence type="ECO:0000269" key="2">
    <source>
    </source>
</evidence>
<evidence type="ECO:0000305" key="3"/>
<organism>
    <name type="scientific">Sus scrofa</name>
    <name type="common">Pig</name>
    <dbReference type="NCBI Taxonomy" id="9823"/>
    <lineage>
        <taxon>Eukaryota</taxon>
        <taxon>Metazoa</taxon>
        <taxon>Chordata</taxon>
        <taxon>Craniata</taxon>
        <taxon>Vertebrata</taxon>
        <taxon>Euteleostomi</taxon>
        <taxon>Mammalia</taxon>
        <taxon>Eutheria</taxon>
        <taxon>Laurasiatheria</taxon>
        <taxon>Artiodactyla</taxon>
        <taxon>Suina</taxon>
        <taxon>Suidae</taxon>
        <taxon>Sus</taxon>
    </lineage>
</organism>
<feature type="signal peptide" evidence="2">
    <location>
        <begin position="1"/>
        <end position="28"/>
    </location>
</feature>
<feature type="chain" id="PRO_0000002063" description="Apolipoprotein R">
    <location>
        <begin position="29"/>
        <end position="202"/>
    </location>
</feature>
<feature type="domain" description="Sushi 1" evidence="1">
    <location>
        <begin position="29"/>
        <end position="87"/>
    </location>
</feature>
<feature type="domain" description="Sushi 2" evidence="1">
    <location>
        <begin position="88"/>
        <end position="145"/>
    </location>
</feature>
<feature type="disulfide bond" evidence="1">
    <location>
        <begin position="30"/>
        <end position="73"/>
    </location>
</feature>
<feature type="disulfide bond" evidence="1">
    <location>
        <begin position="59"/>
        <end position="85"/>
    </location>
</feature>
<feature type="disulfide bond" evidence="1">
    <location>
        <begin position="89"/>
        <end position="130"/>
    </location>
</feature>
<feature type="disulfide bond" evidence="1">
    <location>
        <begin position="116"/>
        <end position="143"/>
    </location>
</feature>
<feature type="disulfide bond" description="Interchain" evidence="1">
    <location>
        <position position="151"/>
    </location>
</feature>
<feature type="disulfide bond" description="Interchain" evidence="1">
    <location>
        <position position="163"/>
    </location>
</feature>
<feature type="sequence conflict" description="In Ref. 1; AA sequence." evidence="3" ref="1">
    <original>I</original>
    <variation>V</variation>
    <location>
        <position position="44"/>
    </location>
</feature>
<feature type="sequence conflict" description="In Ref. 1; AA sequence." evidence="3" ref="1">
    <original>G</original>
    <variation>A</variation>
    <location>
        <position position="46"/>
    </location>
</feature>
<comment type="function">
    <text>May be a lipoprotein-borne regulator of either the coagulation or the complement cascades.</text>
</comment>
<comment type="subunit">
    <text>Forms high molecular weight disulfide-linked complexes.</text>
</comment>
<comment type="subcellular location">
    <subcellularLocation>
        <location>Secreted</location>
    </subcellularLocation>
</comment>
<comment type="tissue specificity">
    <text>Plasma. Found on very low-density lipoprotein (VLDL), on chylomicrons, and in the D &gt; 1.21 g/ml fraction of pig plasma. Found in liver, spleen, lung, bone marrow and lymph node.</text>
</comment>
<comment type="developmental stage">
    <text>Terminally differentiated macrophages.</text>
</comment>
<gene>
    <name type="primary">APOR</name>
</gene>
<protein>
    <recommendedName>
        <fullName>Apolipoprotein R</fullName>
        <shortName>Apo-R</shortName>
    </recommendedName>
</protein>
<keyword id="KW-0903">Direct protein sequencing</keyword>
<keyword id="KW-1015">Disulfide bond</keyword>
<keyword id="KW-0445">Lipid transport</keyword>
<keyword id="KW-1185">Reference proteome</keyword>
<keyword id="KW-0677">Repeat</keyword>
<keyword id="KW-0964">Secreted</keyword>
<keyword id="KW-0732">Signal</keyword>
<keyword id="KW-0768">Sushi</keyword>
<keyword id="KW-0813">Transport</keyword>
<name>APOR_PIG</name>
<sequence length="202" mass="22724">MPPNLQRIFPALCLLGVLFLLHCTPVLCGCDNPPVVAHGHHTQIIGLFGMKKDEVVYKCDEGYTLVGEDRLSCRSSRWSPAAPQCKALCPKPQIDRGKLSVDQDEYIESENVIVQCGSGYGLVGPKIITCTEDGTWHPRVPKCEWEYPEDCEQVHEGKKLMQCLPNLEEIKLALELYKLSLETKLLELQIDKEKKAKAKYSI</sequence>
<reference key="1">
    <citation type="journal article" date="1992" name="Biochemistry">
        <title>Pig apolipoprotein R: a new member of the short consensus repeat family of proteins.</title>
        <authorList>
            <person name="Cooper S.T."/>
            <person name="Attie A.D."/>
        </authorList>
    </citation>
    <scope>NUCLEOTIDE SEQUENCE [MRNA]</scope>
    <scope>PROTEIN SEQUENCE OF 29-47</scope>
    <source>
        <tissue>Liver</tissue>
    </source>
</reference>
<proteinExistence type="evidence at protein level"/>